<dbReference type="GlyCosmos" id="P0CV67">
    <property type="glycosylation" value="1 site, No reported glycans"/>
</dbReference>
<dbReference type="GO" id="GO:0005576">
    <property type="term" value="C:extracellular region"/>
    <property type="evidence" value="ECO:0007669"/>
    <property type="project" value="UniProtKB-SubCell"/>
</dbReference>
<dbReference type="GO" id="GO:0020002">
    <property type="term" value="C:host cell plasma membrane"/>
    <property type="evidence" value="ECO:0007669"/>
    <property type="project" value="UniProtKB-SubCell"/>
</dbReference>
<dbReference type="GO" id="GO:0016020">
    <property type="term" value="C:membrane"/>
    <property type="evidence" value="ECO:0007669"/>
    <property type="project" value="UniProtKB-KW"/>
</dbReference>
<protein>
    <recommendedName>
        <fullName evidence="4">Secreted RxLR effector protein 153</fullName>
    </recommendedName>
</protein>
<evidence type="ECO:0000255" key="1"/>
<evidence type="ECO:0000255" key="2">
    <source>
        <dbReference type="PROSITE-ProRule" id="PRU00498"/>
    </source>
</evidence>
<evidence type="ECO:0000269" key="3">
    <source>
    </source>
</evidence>
<evidence type="ECO:0000303" key="4">
    <source>
    </source>
</evidence>
<evidence type="ECO:0000305" key="5"/>
<evidence type="ECO:0000305" key="6">
    <source>
    </source>
</evidence>
<feature type="signal peptide" evidence="1">
    <location>
        <begin position="1"/>
        <end position="27"/>
    </location>
</feature>
<feature type="chain" id="PRO_0000447977" description="Secreted RxLR effector protein 153">
    <location>
        <begin position="28"/>
        <end position="275"/>
    </location>
</feature>
<feature type="short sequence motif" description="RxLR-dEER" evidence="6">
    <location>
        <begin position="48"/>
        <end position="63"/>
    </location>
</feature>
<feature type="glycosylation site" description="N-linked (GlcNAc...) asparagine" evidence="2">
    <location>
        <position position="45"/>
    </location>
</feature>
<organism>
    <name type="scientific">Plasmopara viticola</name>
    <name type="common">Downy mildew of grapevine</name>
    <name type="synonym">Botrytis viticola</name>
    <dbReference type="NCBI Taxonomy" id="143451"/>
    <lineage>
        <taxon>Eukaryota</taxon>
        <taxon>Sar</taxon>
        <taxon>Stramenopiles</taxon>
        <taxon>Oomycota</taxon>
        <taxon>Peronosporales</taxon>
        <taxon>Peronosporaceae</taxon>
        <taxon>Plasmopara</taxon>
    </lineage>
</organism>
<comment type="function">
    <text evidence="3">Secreted effector that completely suppresses the host cell death induced by cell death-inducing proteins.</text>
</comment>
<comment type="subcellular location">
    <subcellularLocation>
        <location evidence="3">Secreted</location>
    </subcellularLocation>
    <subcellularLocation>
        <location evidence="3">Host cell membrane</location>
    </subcellularLocation>
</comment>
<comment type="domain">
    <text evidence="6">The RxLR-dEER motif acts to carry the protein into the host cell cytoplasm through binding to cell surface phosphatidylinositol-3-phosphate.</text>
</comment>
<comment type="similarity">
    <text evidence="5">Belongs to the RxLR effector family.</text>
</comment>
<reference key="1">
    <citation type="journal article" date="2018" name="Front. Plant Sci.">
        <title>In planta functional analysis and subcellular localization of the oomycete pathogen Plasmopara viticola candidate RXLR effector repertoire.</title>
        <authorList>
            <person name="Liu Y."/>
            <person name="Lan X."/>
            <person name="Song S."/>
            <person name="Yin L."/>
            <person name="Dry I.B."/>
            <person name="Qu J."/>
            <person name="Xiang J."/>
            <person name="Lu J."/>
        </authorList>
    </citation>
    <scope>NUCLEOTIDE SEQUENCE [MRNA]</scope>
    <scope>DOMAIN</scope>
    <scope>FUNCTION</scope>
    <scope>SUBCELLULAR LOCATION</scope>
</reference>
<accession>P0CV67</accession>
<keyword id="KW-0325">Glycoprotein</keyword>
<keyword id="KW-1032">Host cell membrane</keyword>
<keyword id="KW-1043">Host membrane</keyword>
<keyword id="KW-0472">Membrane</keyword>
<keyword id="KW-0964">Secreted</keyword>
<keyword id="KW-0732">Signal</keyword>
<keyword id="KW-0843">Virulence</keyword>
<gene>
    <name evidence="4" type="primary">RXLR153</name>
</gene>
<proteinExistence type="evidence at transcript level"/>
<sequence>MRNRAFLFGLFFIEYACLVLFAAPTRASLLKSNVESTLAEQWDSNGTRTLQADDSKRISAEERSMEQALLPGAEAMGKTKVPEKAVPRASLGSKLNPLNWPKRIWYKLRLWYARVRLYILKQKTTGENAIGIAAMEGLTPLSLKKLKNEIFHYSSSEPHDKWLIEKDYNSFVKHYFSQFYGLYQNPPVSEIDKWNILVEEMLPLERIAVRMAMDRVGRIVDKGYSIEKLISLDVSPLLYLRLMDSKGVFENVKENKDAIEHLRDYVEAYHKNVMM</sequence>
<name>RL153_PLAVT</name>